<reference key="1">
    <citation type="journal article" date="1998" name="Fish Physiol. Biochem.">
        <title>Isolation and structural characterization of hepatic metallothionein from the roach (Rutilus rutilus).</title>
        <authorList>
            <person name="Grumiaux F."/>
            <person name="Bulet P."/>
            <person name="Salzet M."/>
            <person name="Demuynck S."/>
            <person name="Dhainaut-Courtois N."/>
        </authorList>
    </citation>
    <scope>PROTEIN SEQUENCE</scope>
    <source>
        <tissue>Liver</tissue>
    </source>
</reference>
<protein>
    <recommendedName>
        <fullName>Metallothionein</fullName>
        <shortName>MT</shortName>
    </recommendedName>
</protein>
<comment type="function">
    <text evidence="1">Metallothioneins have a high content of cysteine residues that bind various heavy metals.</text>
</comment>
<comment type="domain">
    <text>Class I metallothioneins contain 2 metal-binding domains: four divalent ions are chelated within cluster A of the alpha domain and are coordinated via cysteinyl thiolate bridges to 11 cysteine ligands. Cluster B, the corresponding region within the beta domain, can ligate three divalent ions to 9 cysteines.</text>
</comment>
<comment type="similarity">
    <text evidence="4">Belongs to the metallothionein superfamily. Type 1 family.</text>
</comment>
<sequence length="60" mass="5976">MDPCDCAKTGTCNCGATCKCTNCQCTTCKKSCCTCCPSGCSKCASGCVCKGNSCGSSCCQ</sequence>
<name>MT_RUTRU</name>
<evidence type="ECO:0000250" key="1"/>
<evidence type="ECO:0000250" key="2">
    <source>
        <dbReference type="UniProtKB" id="P02795"/>
    </source>
</evidence>
<evidence type="ECO:0000250" key="3">
    <source>
        <dbReference type="UniProtKB" id="P62339"/>
    </source>
</evidence>
<evidence type="ECO:0000305" key="4"/>
<gene>
    <name type="primary">mt</name>
</gene>
<organism>
    <name type="scientific">Rutilus rutilus</name>
    <name type="common">Roach</name>
    <dbReference type="NCBI Taxonomy" id="48668"/>
    <lineage>
        <taxon>Eukaryota</taxon>
        <taxon>Metazoa</taxon>
        <taxon>Chordata</taxon>
        <taxon>Craniata</taxon>
        <taxon>Vertebrata</taxon>
        <taxon>Euteleostomi</taxon>
        <taxon>Actinopterygii</taxon>
        <taxon>Neopterygii</taxon>
        <taxon>Teleostei</taxon>
        <taxon>Ostariophysi</taxon>
        <taxon>Cypriniformes</taxon>
        <taxon>Leuciscidae</taxon>
        <taxon>Leuciscinae</taxon>
        <taxon>Rutilus</taxon>
    </lineage>
</organism>
<feature type="chain" id="PRO_0000197311" description="Metallothionein">
    <location>
        <begin position="1"/>
        <end position="60"/>
    </location>
</feature>
<feature type="region of interest" description="Beta">
    <location>
        <begin position="1"/>
        <end position="28"/>
    </location>
</feature>
<feature type="region of interest" description="Alpha">
    <location>
        <begin position="29"/>
        <end position="60"/>
    </location>
</feature>
<feature type="binding site" evidence="2">
    <location>
        <position position="4"/>
    </location>
    <ligand>
        <name>a divalent metal cation</name>
        <dbReference type="ChEBI" id="CHEBI:60240"/>
        <label>1</label>
        <note>in cluster B</note>
    </ligand>
</feature>
<feature type="binding site" evidence="2">
    <location>
        <position position="6"/>
    </location>
    <ligand>
        <name>a divalent metal cation</name>
        <dbReference type="ChEBI" id="CHEBI:60240"/>
        <label>1</label>
        <note>in cluster B</note>
    </ligand>
</feature>
<feature type="binding site" evidence="2">
    <location>
        <position position="6"/>
    </location>
    <ligand>
        <name>a divalent metal cation</name>
        <dbReference type="ChEBI" id="CHEBI:60240"/>
        <label>2</label>
        <note>in cluster B</note>
    </ligand>
</feature>
<feature type="binding site" evidence="2">
    <location>
        <position position="12"/>
    </location>
    <ligand>
        <name>a divalent metal cation</name>
        <dbReference type="ChEBI" id="CHEBI:60240"/>
        <label>2</label>
        <note>in cluster B</note>
    </ligand>
</feature>
<feature type="binding site" evidence="2">
    <location>
        <position position="14"/>
    </location>
    <ligand>
        <name>a divalent metal cation</name>
        <dbReference type="ChEBI" id="CHEBI:60240"/>
        <label>2</label>
        <note>in cluster B</note>
    </ligand>
</feature>
<feature type="binding site" evidence="2">
    <location>
        <position position="14"/>
    </location>
    <ligand>
        <name>a divalent metal cation</name>
        <dbReference type="ChEBI" id="CHEBI:60240"/>
        <label>3</label>
        <note>in cluster B</note>
    </ligand>
</feature>
<feature type="binding site" evidence="2">
    <location>
        <position position="18"/>
    </location>
    <ligand>
        <name>a divalent metal cation</name>
        <dbReference type="ChEBI" id="CHEBI:60240"/>
        <label>3</label>
        <note>in cluster B</note>
    </ligand>
</feature>
<feature type="binding site" evidence="2">
    <location>
        <position position="20"/>
    </location>
    <ligand>
        <name>a divalent metal cation</name>
        <dbReference type="ChEBI" id="CHEBI:60240"/>
        <label>1</label>
        <note>in cluster B</note>
    </ligand>
</feature>
<feature type="binding site" evidence="2">
    <location>
        <position position="23"/>
    </location>
    <ligand>
        <name>a divalent metal cation</name>
        <dbReference type="ChEBI" id="CHEBI:60240"/>
        <label>1</label>
        <note>in cluster B</note>
    </ligand>
</feature>
<feature type="binding site" evidence="2">
    <location>
        <position position="23"/>
    </location>
    <ligand>
        <name>a divalent metal cation</name>
        <dbReference type="ChEBI" id="CHEBI:60240"/>
        <label>3</label>
        <note>in cluster B</note>
    </ligand>
</feature>
<feature type="binding site" evidence="2">
    <location>
        <position position="25"/>
    </location>
    <ligand>
        <name>a divalent metal cation</name>
        <dbReference type="ChEBI" id="CHEBI:60240"/>
        <label>2</label>
        <note>in cluster B</note>
    </ligand>
</feature>
<feature type="binding site" evidence="2">
    <location>
        <position position="28"/>
    </location>
    <ligand>
        <name>a divalent metal cation</name>
        <dbReference type="ChEBI" id="CHEBI:60240"/>
        <label>3</label>
        <note>in cluster B</note>
    </ligand>
</feature>
<feature type="binding site" evidence="2">
    <location>
        <position position="32"/>
    </location>
    <ligand>
        <name>a divalent metal cation</name>
        <dbReference type="ChEBI" id="CHEBI:60240"/>
        <label>4</label>
        <note>in cluster A</note>
    </ligand>
</feature>
<feature type="binding site" evidence="2">
    <location>
        <position position="33"/>
    </location>
    <ligand>
        <name>a divalent metal cation</name>
        <dbReference type="ChEBI" id="CHEBI:60240"/>
        <label>4</label>
        <note>in cluster A</note>
    </ligand>
</feature>
<feature type="binding site" evidence="2">
    <location>
        <position position="33"/>
    </location>
    <ligand>
        <name>a divalent metal cation</name>
        <dbReference type="ChEBI" id="CHEBI:60240"/>
        <label>5</label>
        <note>in cluster A</note>
    </ligand>
</feature>
<feature type="binding site" evidence="2">
    <location>
        <position position="35"/>
    </location>
    <ligand>
        <name>a divalent metal cation</name>
        <dbReference type="ChEBI" id="CHEBI:60240"/>
        <label>5</label>
        <note>in cluster A</note>
    </ligand>
</feature>
<feature type="binding site" evidence="2">
    <location>
        <position position="36"/>
    </location>
    <ligand>
        <name>a divalent metal cation</name>
        <dbReference type="ChEBI" id="CHEBI:60240"/>
        <label>5</label>
        <note>in cluster A</note>
    </ligand>
</feature>
<feature type="binding site" evidence="2">
    <location>
        <position position="36"/>
    </location>
    <ligand>
        <name>a divalent metal cation</name>
        <dbReference type="ChEBI" id="CHEBI:60240"/>
        <label>6</label>
        <note>in cluster A</note>
    </ligand>
</feature>
<feature type="binding site" evidence="2">
    <location>
        <position position="40"/>
    </location>
    <ligand>
        <name>a divalent metal cation</name>
        <dbReference type="ChEBI" id="CHEBI:60240"/>
        <label>6</label>
        <note>in cluster A</note>
    </ligand>
</feature>
<feature type="binding site" evidence="2">
    <location>
        <position position="43"/>
    </location>
    <ligand>
        <name>a divalent metal cation</name>
        <dbReference type="ChEBI" id="CHEBI:60240"/>
        <label>4</label>
        <note>in cluster A</note>
    </ligand>
</feature>
<feature type="binding site" evidence="2">
    <location>
        <position position="43"/>
    </location>
    <ligand>
        <name>a divalent metal cation</name>
        <dbReference type="ChEBI" id="CHEBI:60240"/>
        <label>6</label>
        <note>in cluster A</note>
    </ligand>
</feature>
<feature type="binding site" evidence="2">
    <location>
        <position position="47"/>
    </location>
    <ligand>
        <name>a divalent metal cation</name>
        <dbReference type="ChEBI" id="CHEBI:60240"/>
        <label>4</label>
        <note>in cluster A</note>
    </ligand>
</feature>
<feature type="binding site" evidence="2">
    <location>
        <position position="49"/>
    </location>
    <ligand>
        <name>a divalent metal cation</name>
        <dbReference type="ChEBI" id="CHEBI:60240"/>
        <label>5</label>
        <note>in cluster A</note>
    </ligand>
</feature>
<feature type="binding site" evidence="2">
    <location>
        <position position="49"/>
    </location>
    <ligand>
        <name>a divalent metal cation</name>
        <dbReference type="ChEBI" id="CHEBI:60240"/>
        <label>7</label>
        <note>in cluster A</note>
    </ligand>
</feature>
<feature type="binding site" evidence="3">
    <location>
        <position position="54"/>
    </location>
    <ligand>
        <name>a divalent metal cation</name>
        <dbReference type="ChEBI" id="CHEBI:60240"/>
        <label>7</label>
        <note>in cluster A</note>
    </ligand>
</feature>
<feature type="binding site" evidence="2">
    <location>
        <position position="58"/>
    </location>
    <ligand>
        <name>a divalent metal cation</name>
        <dbReference type="ChEBI" id="CHEBI:60240"/>
        <label>7</label>
        <note>in cluster A</note>
    </ligand>
</feature>
<feature type="binding site" evidence="2">
    <location>
        <position position="59"/>
    </location>
    <ligand>
        <name>a divalent metal cation</name>
        <dbReference type="ChEBI" id="CHEBI:60240"/>
        <label>6</label>
        <note>in cluster A</note>
    </ligand>
</feature>
<feature type="binding site" evidence="2">
    <location>
        <position position="59"/>
    </location>
    <ligand>
        <name>a divalent metal cation</name>
        <dbReference type="ChEBI" id="CHEBI:60240"/>
        <label>7</label>
        <note>in cluster A</note>
    </ligand>
</feature>
<keyword id="KW-0903">Direct protein sequencing</keyword>
<keyword id="KW-0479">Metal-binding</keyword>
<keyword id="KW-0480">Metal-thiolate cluster</keyword>
<dbReference type="SMR" id="P80593"/>
<dbReference type="GO" id="GO:0046872">
    <property type="term" value="F:metal ion binding"/>
    <property type="evidence" value="ECO:0007669"/>
    <property type="project" value="UniProtKB-KW"/>
</dbReference>
<dbReference type="FunFam" id="4.10.10.10:FF:000001">
    <property type="entry name" value="Metallothionein"/>
    <property type="match status" value="1"/>
</dbReference>
<dbReference type="Gene3D" id="4.10.10.10">
    <property type="entry name" value="Metallothionein Isoform II"/>
    <property type="match status" value="1"/>
</dbReference>
<dbReference type="InterPro" id="IPR017854">
    <property type="entry name" value="Metalthion_dom_sf"/>
</dbReference>
<dbReference type="InterPro" id="IPR023587">
    <property type="entry name" value="Metalthion_dom_sf_vert"/>
</dbReference>
<dbReference type="InterPro" id="IPR000006">
    <property type="entry name" value="Metalthion_vert"/>
</dbReference>
<dbReference type="InterPro" id="IPR018064">
    <property type="entry name" value="Metalthion_vert_metal_BS"/>
</dbReference>
<dbReference type="PANTHER" id="PTHR23299">
    <property type="entry name" value="METALLOTHIONEIN"/>
    <property type="match status" value="1"/>
</dbReference>
<dbReference type="PANTHER" id="PTHR23299:SF24">
    <property type="entry name" value="METALLOTHIONEIN-1X"/>
    <property type="match status" value="1"/>
</dbReference>
<dbReference type="Pfam" id="PF00131">
    <property type="entry name" value="Metallothio"/>
    <property type="match status" value="1"/>
</dbReference>
<dbReference type="PRINTS" id="PR00860">
    <property type="entry name" value="MTVERTEBRATE"/>
</dbReference>
<dbReference type="SUPFAM" id="SSF57868">
    <property type="entry name" value="Metallothionein"/>
    <property type="match status" value="1"/>
</dbReference>
<dbReference type="PROSITE" id="PS00203">
    <property type="entry name" value="METALLOTHIONEIN_VRT"/>
    <property type="match status" value="1"/>
</dbReference>
<accession>P80593</accession>
<proteinExistence type="evidence at protein level"/>